<keyword id="KW-0520">NAD</keyword>
<keyword id="KW-0560">Oxidoreductase</keyword>
<keyword id="KW-0816">Tricarboxylic acid cycle</keyword>
<name>MDH_HYDS0</name>
<feature type="chain" id="PRO_1000126137" description="Malate dehydrogenase">
    <location>
        <begin position="1"/>
        <end position="332"/>
    </location>
</feature>
<feature type="active site" description="Proton acceptor" evidence="1">
    <location>
        <position position="190"/>
    </location>
</feature>
<feature type="binding site" evidence="1">
    <location>
        <begin position="11"/>
        <end position="16"/>
    </location>
    <ligand>
        <name>NAD(+)</name>
        <dbReference type="ChEBI" id="CHEBI:57540"/>
    </ligand>
</feature>
<feature type="binding site" evidence="1">
    <location>
        <position position="35"/>
    </location>
    <ligand>
        <name>NAD(+)</name>
        <dbReference type="ChEBI" id="CHEBI:57540"/>
    </ligand>
</feature>
<feature type="binding site" evidence="1">
    <location>
        <position position="97"/>
    </location>
    <ligand>
        <name>substrate</name>
    </ligand>
</feature>
<feature type="binding site" evidence="1">
    <location>
        <position position="103"/>
    </location>
    <ligand>
        <name>substrate</name>
    </ligand>
</feature>
<feature type="binding site" evidence="1">
    <location>
        <position position="110"/>
    </location>
    <ligand>
        <name>NAD(+)</name>
        <dbReference type="ChEBI" id="CHEBI:57540"/>
    </ligand>
</feature>
<feature type="binding site" evidence="1">
    <location>
        <begin position="133"/>
        <end position="135"/>
    </location>
    <ligand>
        <name>NAD(+)</name>
        <dbReference type="ChEBI" id="CHEBI:57540"/>
    </ligand>
</feature>
<feature type="binding site" evidence="1">
    <location>
        <position position="135"/>
    </location>
    <ligand>
        <name>substrate</name>
    </ligand>
</feature>
<feature type="binding site" evidence="1">
    <location>
        <position position="166"/>
    </location>
    <ligand>
        <name>substrate</name>
    </ligand>
</feature>
<accession>B4U831</accession>
<protein>
    <recommendedName>
        <fullName evidence="1">Malate dehydrogenase</fullName>
        <ecNumber evidence="1">1.1.1.37</ecNumber>
    </recommendedName>
</protein>
<evidence type="ECO:0000255" key="1">
    <source>
        <dbReference type="HAMAP-Rule" id="MF_00487"/>
    </source>
</evidence>
<organism>
    <name type="scientific">Hydrogenobaculum sp. (strain Y04AAS1)</name>
    <dbReference type="NCBI Taxonomy" id="380749"/>
    <lineage>
        <taxon>Bacteria</taxon>
        <taxon>Pseudomonadati</taxon>
        <taxon>Aquificota</taxon>
        <taxon>Aquificia</taxon>
        <taxon>Aquificales</taxon>
        <taxon>Aquificaceae</taxon>
        <taxon>Hydrogenobaculum</taxon>
    </lineage>
</organism>
<sequence>MGHKKTVSIIGAGNVGEHIASLLVLKGAVNIRLFDLPKKDGEKLYAHVKGKALDMLQMACALGIDTDISGFVVDQNGNGYEALEGSDIVVITAGFPRKPGMSRDDLLGINISIMNTISEQIKKYAKNSIVIVVTNPVDIMTYAVYKLLGCNRKRVIGMAGVLDSSRFRTFISLELNVSPKDVHAYVIGGHGDEMVPLAGVSNVGGIPISTLIDEKKIKELVERTRFGGGEIVDYMGTSAYHAPAASVVEMIESVALNAKRVLTCSVLLDEEASKYYEAENLCVGVPVKLGENGVEKIVKVPMTDFERDLWMKSVASVKKNIAIADEFVSKYI</sequence>
<proteinExistence type="inferred from homology"/>
<dbReference type="EC" id="1.1.1.37" evidence="1"/>
<dbReference type="EMBL" id="CP001130">
    <property type="protein sequence ID" value="ACG57292.1"/>
    <property type="molecule type" value="Genomic_DNA"/>
</dbReference>
<dbReference type="RefSeq" id="WP_012513648.1">
    <property type="nucleotide sequence ID" value="NC_011126.1"/>
</dbReference>
<dbReference type="SMR" id="B4U831"/>
<dbReference type="STRING" id="380749.HY04AAS1_0605"/>
<dbReference type="KEGG" id="hya:HY04AAS1_0605"/>
<dbReference type="eggNOG" id="COG0039">
    <property type="taxonomic scope" value="Bacteria"/>
</dbReference>
<dbReference type="HOGENOM" id="CLU_045401_2_1_0"/>
<dbReference type="OrthoDB" id="9802969at2"/>
<dbReference type="GO" id="GO:0004459">
    <property type="term" value="F:L-lactate dehydrogenase activity"/>
    <property type="evidence" value="ECO:0007669"/>
    <property type="project" value="TreeGrafter"/>
</dbReference>
<dbReference type="GO" id="GO:0030060">
    <property type="term" value="F:L-malate dehydrogenase (NAD+) activity"/>
    <property type="evidence" value="ECO:0007669"/>
    <property type="project" value="UniProtKB-UniRule"/>
</dbReference>
<dbReference type="GO" id="GO:0006089">
    <property type="term" value="P:lactate metabolic process"/>
    <property type="evidence" value="ECO:0007669"/>
    <property type="project" value="TreeGrafter"/>
</dbReference>
<dbReference type="GO" id="GO:0006099">
    <property type="term" value="P:tricarboxylic acid cycle"/>
    <property type="evidence" value="ECO:0007669"/>
    <property type="project" value="UniProtKB-UniRule"/>
</dbReference>
<dbReference type="CDD" id="cd01339">
    <property type="entry name" value="LDH-like_MDH"/>
    <property type="match status" value="1"/>
</dbReference>
<dbReference type="FunFam" id="3.40.50.720:FF:000018">
    <property type="entry name" value="Malate dehydrogenase"/>
    <property type="match status" value="1"/>
</dbReference>
<dbReference type="Gene3D" id="3.90.110.10">
    <property type="entry name" value="Lactate dehydrogenase/glycoside hydrolase, family 4, C-terminal"/>
    <property type="match status" value="1"/>
</dbReference>
<dbReference type="Gene3D" id="3.40.50.720">
    <property type="entry name" value="NAD(P)-binding Rossmann-like Domain"/>
    <property type="match status" value="1"/>
</dbReference>
<dbReference type="HAMAP" id="MF_00487">
    <property type="entry name" value="Malate_dehydrog_3"/>
    <property type="match status" value="1"/>
</dbReference>
<dbReference type="InterPro" id="IPR001557">
    <property type="entry name" value="L-lactate/malate_DH"/>
</dbReference>
<dbReference type="InterPro" id="IPR022383">
    <property type="entry name" value="Lactate/malate_DH_C"/>
</dbReference>
<dbReference type="InterPro" id="IPR001236">
    <property type="entry name" value="Lactate/malate_DH_N"/>
</dbReference>
<dbReference type="InterPro" id="IPR015955">
    <property type="entry name" value="Lactate_DH/Glyco_Ohase_4_C"/>
</dbReference>
<dbReference type="InterPro" id="IPR011275">
    <property type="entry name" value="Malate_DH_type3"/>
</dbReference>
<dbReference type="InterPro" id="IPR036291">
    <property type="entry name" value="NAD(P)-bd_dom_sf"/>
</dbReference>
<dbReference type="NCBIfam" id="NF004863">
    <property type="entry name" value="PRK06223.1"/>
    <property type="match status" value="1"/>
</dbReference>
<dbReference type="PANTHER" id="PTHR43128">
    <property type="entry name" value="L-2-HYDROXYCARBOXYLATE DEHYDROGENASE (NAD(P)(+))"/>
    <property type="match status" value="1"/>
</dbReference>
<dbReference type="PANTHER" id="PTHR43128:SF16">
    <property type="entry name" value="L-LACTATE DEHYDROGENASE"/>
    <property type="match status" value="1"/>
</dbReference>
<dbReference type="Pfam" id="PF02866">
    <property type="entry name" value="Ldh_1_C"/>
    <property type="match status" value="1"/>
</dbReference>
<dbReference type="Pfam" id="PF00056">
    <property type="entry name" value="Ldh_1_N"/>
    <property type="match status" value="1"/>
</dbReference>
<dbReference type="PIRSF" id="PIRSF000102">
    <property type="entry name" value="Lac_mal_DH"/>
    <property type="match status" value="1"/>
</dbReference>
<dbReference type="PRINTS" id="PR00086">
    <property type="entry name" value="LLDHDRGNASE"/>
</dbReference>
<dbReference type="SUPFAM" id="SSF56327">
    <property type="entry name" value="LDH C-terminal domain-like"/>
    <property type="match status" value="1"/>
</dbReference>
<dbReference type="SUPFAM" id="SSF51735">
    <property type="entry name" value="NAD(P)-binding Rossmann-fold domains"/>
    <property type="match status" value="1"/>
</dbReference>
<reference key="1">
    <citation type="journal article" date="2009" name="J. Bacteriol.">
        <title>Complete and draft genome sequences of six members of the Aquificales.</title>
        <authorList>
            <person name="Reysenbach A.-L."/>
            <person name="Hamamura N."/>
            <person name="Podar M."/>
            <person name="Griffiths E."/>
            <person name="Ferreira S."/>
            <person name="Hochstein R."/>
            <person name="Heidelberg J."/>
            <person name="Johnson J."/>
            <person name="Mead D."/>
            <person name="Pohorille A."/>
            <person name="Sarmiento M."/>
            <person name="Schweighofer K."/>
            <person name="Seshadri R."/>
            <person name="Voytek M.A."/>
        </authorList>
    </citation>
    <scope>NUCLEOTIDE SEQUENCE [LARGE SCALE GENOMIC DNA]</scope>
    <source>
        <strain>Y04AAS1</strain>
    </source>
</reference>
<gene>
    <name evidence="1" type="primary">mdh</name>
    <name type="ordered locus">HY04AAS1_0605</name>
</gene>
<comment type="function">
    <text evidence="1">Catalyzes the reversible oxidation of malate to oxaloacetate.</text>
</comment>
<comment type="catalytic activity">
    <reaction evidence="1">
        <text>(S)-malate + NAD(+) = oxaloacetate + NADH + H(+)</text>
        <dbReference type="Rhea" id="RHEA:21432"/>
        <dbReference type="ChEBI" id="CHEBI:15378"/>
        <dbReference type="ChEBI" id="CHEBI:15589"/>
        <dbReference type="ChEBI" id="CHEBI:16452"/>
        <dbReference type="ChEBI" id="CHEBI:57540"/>
        <dbReference type="ChEBI" id="CHEBI:57945"/>
        <dbReference type="EC" id="1.1.1.37"/>
    </reaction>
</comment>
<comment type="similarity">
    <text evidence="1">Belongs to the LDH/MDH superfamily. MDH type 3 family.</text>
</comment>